<gene>
    <name evidence="1" type="primary">ppaX</name>
    <name type="ordered locus">BA_5390</name>
    <name type="ordered locus">GBAA_5390</name>
    <name type="ordered locus">BAS5010</name>
</gene>
<proteinExistence type="inferred from homology"/>
<feature type="chain" id="PRO_0000056834" description="Pyrophosphatase PpaX">
    <location>
        <begin position="1"/>
        <end position="216"/>
    </location>
</feature>
<feature type="active site" description="Nucleophile" evidence="1">
    <location>
        <position position="9"/>
    </location>
</feature>
<dbReference type="EC" id="3.6.1.1" evidence="1"/>
<dbReference type="EMBL" id="AE016879">
    <property type="protein sequence ID" value="AAP29049.1"/>
    <property type="molecule type" value="Genomic_DNA"/>
</dbReference>
<dbReference type="EMBL" id="AE017334">
    <property type="protein sequence ID" value="AAT34524.1"/>
    <property type="molecule type" value="Genomic_DNA"/>
</dbReference>
<dbReference type="EMBL" id="AE017225">
    <property type="protein sequence ID" value="AAT57299.1"/>
    <property type="molecule type" value="Genomic_DNA"/>
</dbReference>
<dbReference type="RefSeq" id="NP_847563.1">
    <property type="nucleotide sequence ID" value="NC_003997.3"/>
</dbReference>
<dbReference type="RefSeq" id="WP_000700957.1">
    <property type="nucleotide sequence ID" value="NZ_WXXJ01000012.1"/>
</dbReference>
<dbReference type="RefSeq" id="YP_031249.1">
    <property type="nucleotide sequence ID" value="NC_005945.1"/>
</dbReference>
<dbReference type="SMR" id="Q6HQY9"/>
<dbReference type="STRING" id="261594.GBAA_5390"/>
<dbReference type="DNASU" id="1084949"/>
<dbReference type="GeneID" id="45024993"/>
<dbReference type="KEGG" id="ban:BA_5390"/>
<dbReference type="KEGG" id="bar:GBAA_5390"/>
<dbReference type="KEGG" id="bat:BAS5010"/>
<dbReference type="PATRIC" id="fig|198094.11.peg.5348"/>
<dbReference type="eggNOG" id="COG0546">
    <property type="taxonomic scope" value="Bacteria"/>
</dbReference>
<dbReference type="HOGENOM" id="CLU_045011_19_3_9"/>
<dbReference type="OMA" id="FRQHYAD"/>
<dbReference type="OrthoDB" id="9807630at2"/>
<dbReference type="Proteomes" id="UP000000427">
    <property type="component" value="Chromosome"/>
</dbReference>
<dbReference type="Proteomes" id="UP000000594">
    <property type="component" value="Chromosome"/>
</dbReference>
<dbReference type="GO" id="GO:0005829">
    <property type="term" value="C:cytosol"/>
    <property type="evidence" value="ECO:0007669"/>
    <property type="project" value="TreeGrafter"/>
</dbReference>
<dbReference type="GO" id="GO:0004427">
    <property type="term" value="F:inorganic diphosphate phosphatase activity"/>
    <property type="evidence" value="ECO:0007669"/>
    <property type="project" value="UniProtKB-UniRule"/>
</dbReference>
<dbReference type="GO" id="GO:0000287">
    <property type="term" value="F:magnesium ion binding"/>
    <property type="evidence" value="ECO:0007669"/>
    <property type="project" value="UniProtKB-UniRule"/>
</dbReference>
<dbReference type="GO" id="GO:0008967">
    <property type="term" value="F:phosphoglycolate phosphatase activity"/>
    <property type="evidence" value="ECO:0007669"/>
    <property type="project" value="TreeGrafter"/>
</dbReference>
<dbReference type="GO" id="GO:0006281">
    <property type="term" value="P:DNA repair"/>
    <property type="evidence" value="ECO:0007669"/>
    <property type="project" value="TreeGrafter"/>
</dbReference>
<dbReference type="CDD" id="cd02616">
    <property type="entry name" value="HAD_PPase"/>
    <property type="match status" value="1"/>
</dbReference>
<dbReference type="FunFam" id="3.40.50.1000:FF:000022">
    <property type="entry name" value="Phosphoglycolate phosphatase"/>
    <property type="match status" value="1"/>
</dbReference>
<dbReference type="FunFam" id="1.10.150.240:FF:000008">
    <property type="entry name" value="Pyrophosphatase PpaX"/>
    <property type="match status" value="1"/>
</dbReference>
<dbReference type="Gene3D" id="3.40.50.1000">
    <property type="entry name" value="HAD superfamily/HAD-like"/>
    <property type="match status" value="1"/>
</dbReference>
<dbReference type="Gene3D" id="1.10.150.240">
    <property type="entry name" value="Putative phosphatase, domain 2"/>
    <property type="match status" value="1"/>
</dbReference>
<dbReference type="HAMAP" id="MF_01250">
    <property type="entry name" value="Pyrophosphat_PpaX"/>
    <property type="match status" value="1"/>
</dbReference>
<dbReference type="InterPro" id="IPR050155">
    <property type="entry name" value="HAD-like_hydrolase_sf"/>
</dbReference>
<dbReference type="InterPro" id="IPR036412">
    <property type="entry name" value="HAD-like_sf"/>
</dbReference>
<dbReference type="InterPro" id="IPR006439">
    <property type="entry name" value="HAD-SF_hydro_IA"/>
</dbReference>
<dbReference type="InterPro" id="IPR006549">
    <property type="entry name" value="HAD-SF_hydro_IIIA"/>
</dbReference>
<dbReference type="InterPro" id="IPR041492">
    <property type="entry name" value="HAD_2"/>
</dbReference>
<dbReference type="InterPro" id="IPR023214">
    <property type="entry name" value="HAD_sf"/>
</dbReference>
<dbReference type="InterPro" id="IPR023198">
    <property type="entry name" value="PGP-like_dom2"/>
</dbReference>
<dbReference type="InterPro" id="IPR023733">
    <property type="entry name" value="Pyrophosphatase_Ppax"/>
</dbReference>
<dbReference type="NCBIfam" id="TIGR01549">
    <property type="entry name" value="HAD-SF-IA-v1"/>
    <property type="match status" value="1"/>
</dbReference>
<dbReference type="NCBIfam" id="TIGR01509">
    <property type="entry name" value="HAD-SF-IA-v3"/>
    <property type="match status" value="1"/>
</dbReference>
<dbReference type="NCBIfam" id="TIGR01662">
    <property type="entry name" value="HAD-SF-IIIA"/>
    <property type="match status" value="1"/>
</dbReference>
<dbReference type="NCBIfam" id="NF009804">
    <property type="entry name" value="PRK13288.1"/>
    <property type="match status" value="1"/>
</dbReference>
<dbReference type="PANTHER" id="PTHR43434">
    <property type="entry name" value="PHOSPHOGLYCOLATE PHOSPHATASE"/>
    <property type="match status" value="1"/>
</dbReference>
<dbReference type="PANTHER" id="PTHR43434:SF26">
    <property type="entry name" value="PYROPHOSPHATASE PPAX"/>
    <property type="match status" value="1"/>
</dbReference>
<dbReference type="Pfam" id="PF13419">
    <property type="entry name" value="HAD_2"/>
    <property type="match status" value="1"/>
</dbReference>
<dbReference type="PRINTS" id="PR00413">
    <property type="entry name" value="HADHALOGNASE"/>
</dbReference>
<dbReference type="SFLD" id="SFLDG01135">
    <property type="entry name" value="C1.5.6:_HAD__Beta-PGM__Phospha"/>
    <property type="match status" value="1"/>
</dbReference>
<dbReference type="SFLD" id="SFLDG01129">
    <property type="entry name" value="C1.5:_HAD__Beta-PGM__Phosphata"/>
    <property type="match status" value="1"/>
</dbReference>
<dbReference type="SUPFAM" id="SSF56784">
    <property type="entry name" value="HAD-like"/>
    <property type="match status" value="1"/>
</dbReference>
<keyword id="KW-0378">Hydrolase</keyword>
<keyword id="KW-0460">Magnesium</keyword>
<keyword id="KW-1185">Reference proteome</keyword>
<organism>
    <name type="scientific">Bacillus anthracis</name>
    <dbReference type="NCBI Taxonomy" id="1392"/>
    <lineage>
        <taxon>Bacteria</taxon>
        <taxon>Bacillati</taxon>
        <taxon>Bacillota</taxon>
        <taxon>Bacilli</taxon>
        <taxon>Bacillales</taxon>
        <taxon>Bacillaceae</taxon>
        <taxon>Bacillus</taxon>
        <taxon>Bacillus cereus group</taxon>
    </lineage>
</organism>
<protein>
    <recommendedName>
        <fullName evidence="1">Pyrophosphatase PpaX</fullName>
        <ecNumber evidence="1">3.6.1.1</ecNumber>
    </recommendedName>
</protein>
<sequence>MKINTVLFDLDGTLINTNELIISSFLHTLHTYYPNQYKREDVLPFIGPSLHDTFSKIDESKVEELITSYRQFNHDHHDELVEEYETVYETVQELKKQGYKVGIVTTKARQTVEMGLKLSKLDEFFDVVVTIDDVEHVKPHPEPLQKALQLLDAKPEEALMVGDNHHDIVGGQNAGTKTAAVSWTLKGRAYLETYKPDFMLDKMSDLLLILSDMNRS</sequence>
<reference key="1">
    <citation type="journal article" date="2003" name="Nature">
        <title>The genome sequence of Bacillus anthracis Ames and comparison to closely related bacteria.</title>
        <authorList>
            <person name="Read T.D."/>
            <person name="Peterson S.N."/>
            <person name="Tourasse N.J."/>
            <person name="Baillie L.W."/>
            <person name="Paulsen I.T."/>
            <person name="Nelson K.E."/>
            <person name="Tettelin H."/>
            <person name="Fouts D.E."/>
            <person name="Eisen J.A."/>
            <person name="Gill S.R."/>
            <person name="Holtzapple E.K."/>
            <person name="Okstad O.A."/>
            <person name="Helgason E."/>
            <person name="Rilstone J."/>
            <person name="Wu M."/>
            <person name="Kolonay J.F."/>
            <person name="Beanan M.J."/>
            <person name="Dodson R.J."/>
            <person name="Brinkac L.M."/>
            <person name="Gwinn M.L."/>
            <person name="DeBoy R.T."/>
            <person name="Madpu R."/>
            <person name="Daugherty S.C."/>
            <person name="Durkin A.S."/>
            <person name="Haft D.H."/>
            <person name="Nelson W.C."/>
            <person name="Peterson J.D."/>
            <person name="Pop M."/>
            <person name="Khouri H.M."/>
            <person name="Radune D."/>
            <person name="Benton J.L."/>
            <person name="Mahamoud Y."/>
            <person name="Jiang L."/>
            <person name="Hance I.R."/>
            <person name="Weidman J.F."/>
            <person name="Berry K.J."/>
            <person name="Plaut R.D."/>
            <person name="Wolf A.M."/>
            <person name="Watkins K.L."/>
            <person name="Nierman W.C."/>
            <person name="Hazen A."/>
            <person name="Cline R.T."/>
            <person name="Redmond C."/>
            <person name="Thwaite J.E."/>
            <person name="White O."/>
            <person name="Salzberg S.L."/>
            <person name="Thomason B."/>
            <person name="Friedlander A.M."/>
            <person name="Koehler T.M."/>
            <person name="Hanna P.C."/>
            <person name="Kolstoe A.-B."/>
            <person name="Fraser C.M."/>
        </authorList>
    </citation>
    <scope>NUCLEOTIDE SEQUENCE [LARGE SCALE GENOMIC DNA]</scope>
    <source>
        <strain>Ames / isolate Porton</strain>
    </source>
</reference>
<reference key="2">
    <citation type="journal article" date="2009" name="J. Bacteriol.">
        <title>The complete genome sequence of Bacillus anthracis Ames 'Ancestor'.</title>
        <authorList>
            <person name="Ravel J."/>
            <person name="Jiang L."/>
            <person name="Stanley S.T."/>
            <person name="Wilson M.R."/>
            <person name="Decker R.S."/>
            <person name="Read T.D."/>
            <person name="Worsham P."/>
            <person name="Keim P.S."/>
            <person name="Salzberg S.L."/>
            <person name="Fraser-Liggett C.M."/>
            <person name="Rasko D.A."/>
        </authorList>
    </citation>
    <scope>NUCLEOTIDE SEQUENCE [LARGE SCALE GENOMIC DNA]</scope>
    <source>
        <strain>Ames ancestor</strain>
    </source>
</reference>
<reference key="3">
    <citation type="submission" date="2004-01" db="EMBL/GenBank/DDBJ databases">
        <title>Complete genome sequence of Bacillus anthracis Sterne.</title>
        <authorList>
            <person name="Brettin T.S."/>
            <person name="Bruce D."/>
            <person name="Challacombe J.F."/>
            <person name="Gilna P."/>
            <person name="Han C."/>
            <person name="Hill K."/>
            <person name="Hitchcock P."/>
            <person name="Jackson P."/>
            <person name="Keim P."/>
            <person name="Longmire J."/>
            <person name="Lucas S."/>
            <person name="Okinaka R."/>
            <person name="Richardson P."/>
            <person name="Rubin E."/>
            <person name="Tice H."/>
        </authorList>
    </citation>
    <scope>NUCLEOTIDE SEQUENCE [LARGE SCALE GENOMIC DNA]</scope>
    <source>
        <strain>Sterne</strain>
    </source>
</reference>
<name>PPAX_BACAN</name>
<evidence type="ECO:0000255" key="1">
    <source>
        <dbReference type="HAMAP-Rule" id="MF_01250"/>
    </source>
</evidence>
<comment type="function">
    <text evidence="1">Hydrolyzes pyrophosphate formed during P-Ser-HPr dephosphorylation by HPrK/P. Might play a role in controlling the intracellular pyrophosphate pool.</text>
</comment>
<comment type="catalytic activity">
    <reaction evidence="1">
        <text>diphosphate + H2O = 2 phosphate + H(+)</text>
        <dbReference type="Rhea" id="RHEA:24576"/>
        <dbReference type="ChEBI" id="CHEBI:15377"/>
        <dbReference type="ChEBI" id="CHEBI:15378"/>
        <dbReference type="ChEBI" id="CHEBI:33019"/>
        <dbReference type="ChEBI" id="CHEBI:43474"/>
        <dbReference type="EC" id="3.6.1.1"/>
    </reaction>
</comment>
<comment type="cofactor">
    <cofactor evidence="1">
        <name>Mg(2+)</name>
        <dbReference type="ChEBI" id="CHEBI:18420"/>
    </cofactor>
</comment>
<comment type="similarity">
    <text evidence="1">Belongs to the HAD-like hydrolase superfamily. PpaX family.</text>
</comment>
<accession>Q6HQY9</accession>
<accession>Q6KKA8</accession>
<accession>Q81X53</accession>